<organism>
    <name type="scientific">Methanopyrus kandleri (strain AV19 / DSM 6324 / JCM 9639 / NBRC 100938)</name>
    <dbReference type="NCBI Taxonomy" id="190192"/>
    <lineage>
        <taxon>Archaea</taxon>
        <taxon>Methanobacteriati</taxon>
        <taxon>Methanobacteriota</taxon>
        <taxon>Methanomada group</taxon>
        <taxon>Methanopyri</taxon>
        <taxon>Methanopyrales</taxon>
        <taxon>Methanopyraceae</taxon>
        <taxon>Methanopyrus</taxon>
    </lineage>
</organism>
<sequence length="74" mass="8674">MAEEESVPKMVAPEDDIREIHSRLDEIERRLDFVWGEVYQRFGKRIGRDIGILYGLVIGLYLCMLYILLGVAFR</sequence>
<gene>
    <name evidence="1" type="primary">mtrG</name>
    <name type="ordered locus">MK0661</name>
</gene>
<comment type="function">
    <text evidence="1">Part of a complex that catalyzes the formation of methyl-coenzyme M and tetrahydromethanopterin from coenzyme M and methyl-tetrahydromethanopterin. This is an energy-conserving, sodium-ion translocating step.</text>
</comment>
<comment type="catalytic activity">
    <reaction evidence="1">
        <text>5-methyl-5,6,7,8-tetrahydromethanopterin + coenzyme M + 2 Na(+)(in) = 5,6,7,8-tetrahydromethanopterin + methyl-coenzyme M + 2 Na(+)(out)</text>
        <dbReference type="Rhea" id="RHEA:53492"/>
        <dbReference type="ChEBI" id="CHEBI:29101"/>
        <dbReference type="ChEBI" id="CHEBI:58103"/>
        <dbReference type="ChEBI" id="CHEBI:58116"/>
        <dbReference type="ChEBI" id="CHEBI:58286"/>
        <dbReference type="ChEBI" id="CHEBI:58319"/>
        <dbReference type="EC" id="7.2.1.4"/>
    </reaction>
</comment>
<comment type="pathway">
    <text evidence="1">One-carbon metabolism; methanogenesis from CO(2); methyl-coenzyme M from 5,10-methylene-5,6,7,8-tetrahydromethanopterin: step 2/2.</text>
</comment>
<comment type="subunit">
    <text evidence="1">The complex is composed of 8 subunits; MtrA, MtrB, MtrC, MtrD, MtrE, MtrF, MtrG and MtrH.</text>
</comment>
<comment type="subcellular location">
    <subcellularLocation>
        <location evidence="1">Cell membrane</location>
        <topology evidence="1">Single-pass membrane protein</topology>
    </subcellularLocation>
</comment>
<comment type="similarity">
    <text evidence="1">Belongs to the MtrG family.</text>
</comment>
<dbReference type="EC" id="7.2.1.4" evidence="1"/>
<dbReference type="EMBL" id="Y14428">
    <property type="protein sequence ID" value="CAA74772.1"/>
    <property type="molecule type" value="Genomic_DNA"/>
</dbReference>
<dbReference type="EMBL" id="AE009439">
    <property type="protein sequence ID" value="AAM01876.1"/>
    <property type="molecule type" value="Genomic_DNA"/>
</dbReference>
<dbReference type="RefSeq" id="WP_011019031.1">
    <property type="nucleotide sequence ID" value="NC_003551.1"/>
</dbReference>
<dbReference type="SMR" id="O32868"/>
<dbReference type="STRING" id="190192.MK0661"/>
<dbReference type="PaxDb" id="190192-MK0661"/>
<dbReference type="EnsemblBacteria" id="AAM01876">
    <property type="protein sequence ID" value="AAM01876"/>
    <property type="gene ID" value="MK0661"/>
</dbReference>
<dbReference type="GeneID" id="1476762"/>
<dbReference type="KEGG" id="mka:MK0661"/>
<dbReference type="HOGENOM" id="CLU_191926_0_0_2"/>
<dbReference type="InParanoid" id="O32868"/>
<dbReference type="OrthoDB" id="147532at2157"/>
<dbReference type="UniPathway" id="UPA00640">
    <property type="reaction ID" value="UER00698"/>
</dbReference>
<dbReference type="Proteomes" id="UP000001826">
    <property type="component" value="Chromosome"/>
</dbReference>
<dbReference type="GO" id="GO:0005886">
    <property type="term" value="C:plasma membrane"/>
    <property type="evidence" value="ECO:0007669"/>
    <property type="project" value="UniProtKB-SubCell"/>
</dbReference>
<dbReference type="GO" id="GO:0030269">
    <property type="term" value="F:tetrahydromethanopterin S-methyltransferase activity"/>
    <property type="evidence" value="ECO:0007669"/>
    <property type="project" value="UniProtKB-UniRule"/>
</dbReference>
<dbReference type="GO" id="GO:0019386">
    <property type="term" value="P:methanogenesis, from carbon dioxide"/>
    <property type="evidence" value="ECO:0007669"/>
    <property type="project" value="UniProtKB-UniRule"/>
</dbReference>
<dbReference type="GO" id="GO:0032259">
    <property type="term" value="P:methylation"/>
    <property type="evidence" value="ECO:0007669"/>
    <property type="project" value="UniProtKB-KW"/>
</dbReference>
<dbReference type="GO" id="GO:0006730">
    <property type="term" value="P:one-carbon metabolic process"/>
    <property type="evidence" value="ECO:0007669"/>
    <property type="project" value="UniProtKB-UniRule"/>
</dbReference>
<dbReference type="HAMAP" id="MF_01500">
    <property type="entry name" value="MtrG"/>
    <property type="match status" value="1"/>
</dbReference>
<dbReference type="InterPro" id="IPR005866">
    <property type="entry name" value="THM_MeTrfase_su_G"/>
</dbReference>
<dbReference type="NCBIfam" id="TIGR01149">
    <property type="entry name" value="mtrG"/>
    <property type="match status" value="1"/>
</dbReference>
<dbReference type="Pfam" id="PF04210">
    <property type="entry name" value="MtrG"/>
    <property type="match status" value="1"/>
</dbReference>
<dbReference type="PIRSF" id="PIRSF006500">
    <property type="entry name" value="MtrG"/>
    <property type="match status" value="1"/>
</dbReference>
<reference key="1">
    <citation type="journal article" date="1997" name="Eur. J. Biochem.">
        <title>Identification of the active site histidine in the corrinoid protein MtrA of the energy-conserving methyltransferase complex from Methanobacterium thermoautotrophicum.</title>
        <authorList>
            <person name="Harms U."/>
            <person name="Thauer R.K."/>
        </authorList>
    </citation>
    <scope>NUCLEOTIDE SEQUENCE [GENOMIC DNA]</scope>
</reference>
<reference key="2">
    <citation type="journal article" date="2002" name="Proc. Natl. Acad. Sci. U.S.A.">
        <title>The complete genome of hyperthermophile Methanopyrus kandleri AV19 and monophyly of archaeal methanogens.</title>
        <authorList>
            <person name="Slesarev A.I."/>
            <person name="Mezhevaya K.V."/>
            <person name="Makarova K.S."/>
            <person name="Polushin N.N."/>
            <person name="Shcherbinina O.V."/>
            <person name="Shakhova V.V."/>
            <person name="Belova G.I."/>
            <person name="Aravind L."/>
            <person name="Natale D.A."/>
            <person name="Rogozin I.B."/>
            <person name="Tatusov R.L."/>
            <person name="Wolf Y.I."/>
            <person name="Stetter K.O."/>
            <person name="Malykh A.G."/>
            <person name="Koonin E.V."/>
            <person name="Kozyavkin S.A."/>
        </authorList>
    </citation>
    <scope>NUCLEOTIDE SEQUENCE [LARGE SCALE GENOMIC DNA]</scope>
    <source>
        <strain>AV19 / DSM 6324 / JCM 9639 / NBRC 100938</strain>
    </source>
</reference>
<name>MTRG_METKA</name>
<keyword id="KW-1003">Cell membrane</keyword>
<keyword id="KW-0472">Membrane</keyword>
<keyword id="KW-0484">Methanogenesis</keyword>
<keyword id="KW-0489">Methyltransferase</keyword>
<keyword id="KW-0554">One-carbon metabolism</keyword>
<keyword id="KW-1185">Reference proteome</keyword>
<keyword id="KW-0808">Transferase</keyword>
<keyword id="KW-1278">Translocase</keyword>
<keyword id="KW-0812">Transmembrane</keyword>
<keyword id="KW-1133">Transmembrane helix</keyword>
<accession>O32868</accession>
<evidence type="ECO:0000255" key="1">
    <source>
        <dbReference type="HAMAP-Rule" id="MF_01500"/>
    </source>
</evidence>
<protein>
    <recommendedName>
        <fullName evidence="1">Tetrahydromethanopterin S-methyltransferase subunit G</fullName>
        <ecNumber evidence="1">7.2.1.4</ecNumber>
    </recommendedName>
    <alternativeName>
        <fullName evidence="1">N5-methyltetrahydromethanopterin--coenzyme M methyltransferase subunit G</fullName>
    </alternativeName>
</protein>
<feature type="chain" id="PRO_0000147556" description="Tetrahydromethanopterin S-methyltransferase subunit G">
    <location>
        <begin position="1"/>
        <end position="74"/>
    </location>
</feature>
<feature type="transmembrane region" description="Helical" evidence="1">
    <location>
        <begin position="50"/>
        <end position="70"/>
    </location>
</feature>
<proteinExistence type="inferred from homology"/>